<keyword id="KW-0539">Nucleus</keyword>
<keyword id="KW-1185">Reference proteome</keyword>
<comment type="subcellular location">
    <subcellularLocation>
        <location evidence="2">Nucleus</location>
    </subcellularLocation>
</comment>
<comment type="tissue specificity">
    <text evidence="1 2">Expressed only in fetal ovary and in undifferentiated ES cells.</text>
</comment>
<comment type="induction">
    <text evidence="1">Down-regulated during differentiation of ES cells.</text>
</comment>
<comment type="caution">
    <text evidence="4">The initiator methionine is coded by a non-canonical CTG leucine codon.</text>
</comment>
<comment type="sequence caution" evidence="3">
    <conflict type="erroneous translation">
        <sequence resource="EMBL-CDS" id="ABD92927"/>
    </conflict>
    <text>Wrong choice of frame.</text>
</comment>
<organism>
    <name type="scientific">Homo sapiens</name>
    <name type="common">Human</name>
    <dbReference type="NCBI Taxonomy" id="9606"/>
    <lineage>
        <taxon>Eukaryota</taxon>
        <taxon>Metazoa</taxon>
        <taxon>Chordata</taxon>
        <taxon>Craniata</taxon>
        <taxon>Vertebrata</taxon>
        <taxon>Euteleostomi</taxon>
        <taxon>Mammalia</taxon>
        <taxon>Eutheria</taxon>
        <taxon>Euarchontoglires</taxon>
        <taxon>Primates</taxon>
        <taxon>Haplorrhini</taxon>
        <taxon>Catarrhini</taxon>
        <taxon>Hominidae</taxon>
        <taxon>Homo</taxon>
    </lineage>
</organism>
<feature type="chain" id="PRO_0000323559" description="Embryonic stem cell-related gene protein">
    <location>
        <begin position="1"/>
        <end position="222"/>
    </location>
</feature>
<feature type="sequence conflict" description="In Ref. 1; ABD92927." evidence="3" ref="1">
    <original>L</original>
    <variation>P</variation>
    <location>
        <position position="70"/>
    </location>
</feature>
<feature type="sequence conflict" description="In Ref. 2; no nucleotide entry." evidence="3" ref="2">
    <original>S</original>
    <variation>F</variation>
    <location>
        <position position="125"/>
    </location>
</feature>
<name>ESRG_HUMAN</name>
<dbReference type="EMBL" id="DQ445779">
    <property type="protein sequence ID" value="ABD92927.1"/>
    <property type="status" value="ALT_SEQ"/>
    <property type="molecule type" value="mRNA"/>
</dbReference>
<dbReference type="EMBL" id="AC092057">
    <property type="status" value="NOT_ANNOTATED_CDS"/>
    <property type="molecule type" value="Genomic_DNA"/>
</dbReference>
<dbReference type="FunCoup" id="Q1W209">
    <property type="interactions" value="623"/>
</dbReference>
<dbReference type="GlyGen" id="Q1W209">
    <property type="glycosylation" value="1 site, 1 O-linked glycan (1 site)"/>
</dbReference>
<dbReference type="BioMuta" id="HGNC:39079"/>
<dbReference type="MassIVE" id="Q1W209"/>
<dbReference type="PeptideAtlas" id="Q1W209"/>
<dbReference type="AGR" id="HGNC:39079"/>
<dbReference type="GeneCards" id="ESRG"/>
<dbReference type="HGNC" id="HGNC:39079">
    <property type="gene designation" value="ESRG"/>
</dbReference>
<dbReference type="MIM" id="611473">
    <property type="type" value="gene"/>
</dbReference>
<dbReference type="neXtProt" id="NX_Q1W209"/>
<dbReference type="InParanoid" id="Q1W209"/>
<dbReference type="PAN-GO" id="Q1W209">
    <property type="GO annotations" value="0 GO annotations based on evolutionary models"/>
</dbReference>
<dbReference type="Pharos" id="Q1W209">
    <property type="development level" value="Tdark"/>
</dbReference>
<dbReference type="PRO" id="PR:Q1W209"/>
<dbReference type="Proteomes" id="UP000005640">
    <property type="component" value="Unplaced"/>
</dbReference>
<dbReference type="RNAct" id="Q1W209">
    <property type="molecule type" value="protein"/>
</dbReference>
<dbReference type="GO" id="GO:0005634">
    <property type="term" value="C:nucleus"/>
    <property type="evidence" value="ECO:0000314"/>
    <property type="project" value="CACAO"/>
</dbReference>
<reference key="1">
    <citation type="journal article" date="2007" name="Biochem. Biophys. Res. Commun.">
        <title>Transcriptional profiling of human embryonic stem cells and embryoid bodies identifies HESRG, a novel stem cell gene.</title>
        <authorList>
            <person name="Zhao M."/>
            <person name="Ren C."/>
            <person name="Yang H."/>
            <person name="Feng X."/>
            <person name="Jiang X."/>
            <person name="Zhu B."/>
            <person name="Zhou W."/>
            <person name="Wang L."/>
            <person name="Zeng Y."/>
            <person name="Yao K."/>
        </authorList>
    </citation>
    <scope>NUCLEOTIDE SEQUENCE [MRNA]</scope>
    <scope>INDUCTION</scope>
    <scope>TISSUE SPECIFICITY</scope>
    <source>
        <tissue>Embryonic stem cell</tissue>
    </source>
</reference>
<reference key="2">
    <citation type="journal article" date="2013" name="Biochem. Biophys. Res. Commun.">
        <title>Identification, expression and subcellular localization of ESRG.</title>
        <authorList>
            <person name="Li G."/>
            <person name="Ren C."/>
            <person name="Shi J."/>
            <person name="Huang W."/>
            <person name="Liu H."/>
            <person name="Feng X."/>
            <person name="Liu W."/>
            <person name="Zhu B."/>
            <person name="Zhang C."/>
            <person name="Wang L."/>
            <person name="Yao K."/>
            <person name="Jiang X."/>
        </authorList>
    </citation>
    <scope>NUCLEOTIDE SEQUENCE [MRNA]</scope>
    <scope>NON-AUG INITIATOR START CODON</scope>
    <scope>TISSUE SPECIFICITY</scope>
    <scope>SUBCELLULAR LOCATION</scope>
</reference>
<reference key="3">
    <citation type="journal article" date="2006" name="Nature">
        <title>The DNA sequence, annotation and analysis of human chromosome 3.</title>
        <authorList>
            <person name="Muzny D.M."/>
            <person name="Scherer S.E."/>
            <person name="Kaul R."/>
            <person name="Wang J."/>
            <person name="Yu J."/>
            <person name="Sudbrak R."/>
            <person name="Buhay C.J."/>
            <person name="Chen R."/>
            <person name="Cree A."/>
            <person name="Ding Y."/>
            <person name="Dugan-Rocha S."/>
            <person name="Gill R."/>
            <person name="Gunaratne P."/>
            <person name="Harris R.A."/>
            <person name="Hawes A.C."/>
            <person name="Hernandez J."/>
            <person name="Hodgson A.V."/>
            <person name="Hume J."/>
            <person name="Jackson A."/>
            <person name="Khan Z.M."/>
            <person name="Kovar-Smith C."/>
            <person name="Lewis L.R."/>
            <person name="Lozado R.J."/>
            <person name="Metzker M.L."/>
            <person name="Milosavljevic A."/>
            <person name="Miner G.R."/>
            <person name="Morgan M.B."/>
            <person name="Nazareth L.V."/>
            <person name="Scott G."/>
            <person name="Sodergren E."/>
            <person name="Song X.-Z."/>
            <person name="Steffen D."/>
            <person name="Wei S."/>
            <person name="Wheeler D.A."/>
            <person name="Wright M.W."/>
            <person name="Worley K.C."/>
            <person name="Yuan Y."/>
            <person name="Zhang Z."/>
            <person name="Adams C.Q."/>
            <person name="Ansari-Lari M.A."/>
            <person name="Ayele M."/>
            <person name="Brown M.J."/>
            <person name="Chen G."/>
            <person name="Chen Z."/>
            <person name="Clendenning J."/>
            <person name="Clerc-Blankenburg K.P."/>
            <person name="Chen R."/>
            <person name="Chen Z."/>
            <person name="Davis C."/>
            <person name="Delgado O."/>
            <person name="Dinh H.H."/>
            <person name="Dong W."/>
            <person name="Draper H."/>
            <person name="Ernst S."/>
            <person name="Fu G."/>
            <person name="Gonzalez-Garay M.L."/>
            <person name="Garcia D.K."/>
            <person name="Gillett W."/>
            <person name="Gu J."/>
            <person name="Hao B."/>
            <person name="Haugen E."/>
            <person name="Havlak P."/>
            <person name="He X."/>
            <person name="Hennig S."/>
            <person name="Hu S."/>
            <person name="Huang W."/>
            <person name="Jackson L.R."/>
            <person name="Jacob L.S."/>
            <person name="Kelly S.H."/>
            <person name="Kube M."/>
            <person name="Levy R."/>
            <person name="Li Z."/>
            <person name="Liu B."/>
            <person name="Liu J."/>
            <person name="Liu W."/>
            <person name="Lu J."/>
            <person name="Maheshwari M."/>
            <person name="Nguyen B.-V."/>
            <person name="Okwuonu G.O."/>
            <person name="Palmeiri A."/>
            <person name="Pasternak S."/>
            <person name="Perez L.M."/>
            <person name="Phelps K.A."/>
            <person name="Plopper F.J."/>
            <person name="Qiang B."/>
            <person name="Raymond C."/>
            <person name="Rodriguez R."/>
            <person name="Saenphimmachak C."/>
            <person name="Santibanez J."/>
            <person name="Shen H."/>
            <person name="Shen Y."/>
            <person name="Subramanian S."/>
            <person name="Tabor P.E."/>
            <person name="Verduzco D."/>
            <person name="Waldron L."/>
            <person name="Wang J."/>
            <person name="Wang J."/>
            <person name="Wang Q."/>
            <person name="Williams G.A."/>
            <person name="Wong G.K.-S."/>
            <person name="Yao Z."/>
            <person name="Zhang J."/>
            <person name="Zhang X."/>
            <person name="Zhao G."/>
            <person name="Zhou J."/>
            <person name="Zhou Y."/>
            <person name="Nelson D."/>
            <person name="Lehrach H."/>
            <person name="Reinhardt R."/>
            <person name="Naylor S.L."/>
            <person name="Yang H."/>
            <person name="Olson M."/>
            <person name="Weinstock G."/>
            <person name="Gibbs R.A."/>
        </authorList>
    </citation>
    <scope>NUCLEOTIDE SEQUENCE [LARGE SCALE GENOMIC DNA]</scope>
</reference>
<accession>Q1W209</accession>
<evidence type="ECO:0000269" key="1">
    <source>
    </source>
</evidence>
<evidence type="ECO:0000269" key="2">
    <source>
    </source>
</evidence>
<evidence type="ECO:0000305" key="3"/>
<evidence type="ECO:0000305" key="4">
    <source>
    </source>
</evidence>
<protein>
    <recommendedName>
        <fullName>Embryonic stem cell-related gene protein</fullName>
        <shortName>hES cell-related gene protein</shortName>
    </recommendedName>
</protein>
<proteinExistence type="evidence at transcript level"/>
<gene>
    <name type="primary">ESRG</name>
    <name type="synonym">HESRG</name>
</gene>
<sequence length="222" mass="24186">MTLFSDSARLHPGEINSLVAHTKPVWWSLHTDAHEIWCRDSDRGTSLGRSIPCPPALCSVRKIHLRPQVLRPTSPRNISPISNPVSGLFLLCSPTSLTIPQPLSPFNLGATLQSLPSLNFNSFHSLVETKETCFIREPKTPAPVTDWEGSLPLVFNHCRDASLISRFRPRRDACLGPSPLAASPAFLGQGQVPLNPFSFTLSGKSRFSGAGASTPQPLLLHP</sequence>